<comment type="function">
    <text evidence="1">Catalyzes the reversible interconversion of serine and glycine with a modified folate serving as the one-carbon carrier. Also exhibits a pteridine-independent aldolase activity toward beta-hydroxyamino acids, producing glycine and aldehydes, via a retro-aldol mechanism.</text>
</comment>
<comment type="cofactor">
    <cofactor evidence="1">
        <name>pyridoxal 5'-phosphate</name>
        <dbReference type="ChEBI" id="CHEBI:597326"/>
    </cofactor>
</comment>
<comment type="pathway">
    <text evidence="1">Amino-acid biosynthesis; glycine biosynthesis; glycine from L-serine: step 1/1.</text>
</comment>
<comment type="subunit">
    <text evidence="1">Homodimer.</text>
</comment>
<comment type="subcellular location">
    <subcellularLocation>
        <location evidence="1">Cytoplasm</location>
    </subcellularLocation>
</comment>
<comment type="similarity">
    <text evidence="1">Belongs to the SHMT family.</text>
</comment>
<dbReference type="EC" id="2.1.2.-" evidence="1"/>
<dbReference type="EMBL" id="CP000077">
    <property type="protein sequence ID" value="AAY80693.1"/>
    <property type="molecule type" value="Genomic_DNA"/>
</dbReference>
<dbReference type="RefSeq" id="WP_011278195.1">
    <property type="nucleotide sequence ID" value="NC_007181.1"/>
</dbReference>
<dbReference type="SMR" id="Q4J937"/>
<dbReference type="STRING" id="330779.Saci_1358"/>
<dbReference type="GeneID" id="14551861"/>
<dbReference type="GeneID" id="78441704"/>
<dbReference type="KEGG" id="sai:Saci_1358"/>
<dbReference type="PATRIC" id="fig|330779.12.peg.1311"/>
<dbReference type="eggNOG" id="arCOG00070">
    <property type="taxonomic scope" value="Archaea"/>
</dbReference>
<dbReference type="HOGENOM" id="CLU_022477_2_1_2"/>
<dbReference type="UniPathway" id="UPA00288">
    <property type="reaction ID" value="UER01023"/>
</dbReference>
<dbReference type="Proteomes" id="UP000001018">
    <property type="component" value="Chromosome"/>
</dbReference>
<dbReference type="GO" id="GO:0005737">
    <property type="term" value="C:cytoplasm"/>
    <property type="evidence" value="ECO:0007669"/>
    <property type="project" value="UniProtKB-SubCell"/>
</dbReference>
<dbReference type="GO" id="GO:0004372">
    <property type="term" value="F:glycine hydroxymethyltransferase activity"/>
    <property type="evidence" value="ECO:0007669"/>
    <property type="project" value="UniProtKB-UniRule"/>
</dbReference>
<dbReference type="GO" id="GO:0030170">
    <property type="term" value="F:pyridoxal phosphate binding"/>
    <property type="evidence" value="ECO:0007669"/>
    <property type="project" value="UniProtKB-UniRule"/>
</dbReference>
<dbReference type="GO" id="GO:0019264">
    <property type="term" value="P:glycine biosynthetic process from serine"/>
    <property type="evidence" value="ECO:0007669"/>
    <property type="project" value="UniProtKB-UniRule"/>
</dbReference>
<dbReference type="GO" id="GO:0035999">
    <property type="term" value="P:tetrahydrofolate interconversion"/>
    <property type="evidence" value="ECO:0007669"/>
    <property type="project" value="InterPro"/>
</dbReference>
<dbReference type="CDD" id="cd00378">
    <property type="entry name" value="SHMT"/>
    <property type="match status" value="1"/>
</dbReference>
<dbReference type="FunFam" id="3.40.640.10:FF:000101">
    <property type="entry name" value="Serine hydroxymethyltransferase"/>
    <property type="match status" value="1"/>
</dbReference>
<dbReference type="FunFam" id="3.90.1150.10:FF:000114">
    <property type="entry name" value="Serine hydroxymethyltransferase"/>
    <property type="match status" value="1"/>
</dbReference>
<dbReference type="Gene3D" id="3.90.1150.10">
    <property type="entry name" value="Aspartate Aminotransferase, domain 1"/>
    <property type="match status" value="1"/>
</dbReference>
<dbReference type="Gene3D" id="3.40.640.10">
    <property type="entry name" value="Type I PLP-dependent aspartate aminotransferase-like (Major domain)"/>
    <property type="match status" value="1"/>
</dbReference>
<dbReference type="HAMAP" id="MF_00051">
    <property type="entry name" value="SHMT"/>
    <property type="match status" value="1"/>
</dbReference>
<dbReference type="InterPro" id="IPR015424">
    <property type="entry name" value="PyrdxlP-dep_Trfase"/>
</dbReference>
<dbReference type="InterPro" id="IPR015421">
    <property type="entry name" value="PyrdxlP-dep_Trfase_major"/>
</dbReference>
<dbReference type="InterPro" id="IPR015422">
    <property type="entry name" value="PyrdxlP-dep_Trfase_small"/>
</dbReference>
<dbReference type="InterPro" id="IPR001085">
    <property type="entry name" value="Ser_HO-MeTrfase"/>
</dbReference>
<dbReference type="InterPro" id="IPR049943">
    <property type="entry name" value="Ser_HO-MeTrfase-like"/>
</dbReference>
<dbReference type="InterPro" id="IPR019798">
    <property type="entry name" value="Ser_HO-MeTrfase_PLP_BS"/>
</dbReference>
<dbReference type="InterPro" id="IPR039429">
    <property type="entry name" value="SHMT-like_dom"/>
</dbReference>
<dbReference type="NCBIfam" id="NF000586">
    <property type="entry name" value="PRK00011.1"/>
    <property type="match status" value="1"/>
</dbReference>
<dbReference type="PANTHER" id="PTHR11680">
    <property type="entry name" value="SERINE HYDROXYMETHYLTRANSFERASE"/>
    <property type="match status" value="1"/>
</dbReference>
<dbReference type="PANTHER" id="PTHR11680:SF35">
    <property type="entry name" value="SERINE HYDROXYMETHYLTRANSFERASE 1"/>
    <property type="match status" value="1"/>
</dbReference>
<dbReference type="Pfam" id="PF00464">
    <property type="entry name" value="SHMT"/>
    <property type="match status" value="1"/>
</dbReference>
<dbReference type="PIRSF" id="PIRSF000412">
    <property type="entry name" value="SHMT"/>
    <property type="match status" value="1"/>
</dbReference>
<dbReference type="SUPFAM" id="SSF53383">
    <property type="entry name" value="PLP-dependent transferases"/>
    <property type="match status" value="1"/>
</dbReference>
<dbReference type="PROSITE" id="PS00096">
    <property type="entry name" value="SHMT"/>
    <property type="match status" value="1"/>
</dbReference>
<sequence>MDKIPEELEKILQITREQNRWRRLETINLIPSENVMSPLAESVYMSDFMYRYAEGKPFKRYYQGTKYADEIEELAMKLVSEISSSKYADLRAVSGTIANAGVFRVLADSGDKAVIAPVQAGAHVSHTRFGTLGALGIEQIEMPYDQESMNVDVDKAIKLIEEVKPKFVTLGGSLYLFPHPVKELAPHVHAVGAKLVYDSAHVYGLIVGKAWHNPLEEGADVVTASTHKTFPGPQGGLIVTNDDSLYKKVSDTIFPWFVSNHHLHRLPSTAITALEMKYFGKEYAQQIVKNAKALAEALAAEGFKVIGEHLGFTKSHQVAIDVRNLGGGAKVAKLFEEANIIANKNLLPYDPPSAVKDPSGVRLGVQEMTRFGMKEEEMRIIARLMREVAIENKDVKEVKKKVTEFRKEFLEVKYTFTNVDLAKYSSKVISLLI</sequence>
<protein>
    <recommendedName>
        <fullName evidence="1">Serine hydroxymethyltransferase</fullName>
        <shortName evidence="1">SHMT</shortName>
        <shortName evidence="1">Serine methylase</shortName>
        <ecNumber evidence="1">2.1.2.-</ecNumber>
    </recommendedName>
</protein>
<proteinExistence type="inferred from homology"/>
<feature type="chain" id="PRO_0000113724" description="Serine hydroxymethyltransferase">
    <location>
        <begin position="1"/>
        <end position="433"/>
    </location>
</feature>
<feature type="binding site" evidence="1">
    <location>
        <begin position="122"/>
        <end position="124"/>
    </location>
    <ligand>
        <name>(6S)-5,6,7,8-tetrahydrofolate</name>
        <dbReference type="ChEBI" id="CHEBI:57453"/>
    </ligand>
</feature>
<feature type="site" description="Plays an important role in substrate specificity" evidence="1">
    <location>
        <position position="227"/>
    </location>
</feature>
<feature type="modified residue" description="N6-(pyridoxal phosphate)lysine" evidence="1">
    <location>
        <position position="228"/>
    </location>
</feature>
<keyword id="KW-0028">Amino-acid biosynthesis</keyword>
<keyword id="KW-0963">Cytoplasm</keyword>
<keyword id="KW-0554">One-carbon metabolism</keyword>
<keyword id="KW-0663">Pyridoxal phosphate</keyword>
<keyword id="KW-1185">Reference proteome</keyword>
<keyword id="KW-0808">Transferase</keyword>
<reference key="1">
    <citation type="journal article" date="2005" name="J. Bacteriol.">
        <title>The genome of Sulfolobus acidocaldarius, a model organism of the Crenarchaeota.</title>
        <authorList>
            <person name="Chen L."/>
            <person name="Bruegger K."/>
            <person name="Skovgaard M."/>
            <person name="Redder P."/>
            <person name="She Q."/>
            <person name="Torarinsson E."/>
            <person name="Greve B."/>
            <person name="Awayez M."/>
            <person name="Zibat A."/>
            <person name="Klenk H.-P."/>
            <person name="Garrett R.A."/>
        </authorList>
    </citation>
    <scope>NUCLEOTIDE SEQUENCE [LARGE SCALE GENOMIC DNA]</scope>
    <source>
        <strain>ATCC 33909 / DSM 639 / JCM 8929 / NBRC 15157 / NCIMB 11770</strain>
    </source>
</reference>
<name>GLYA_SULAC</name>
<gene>
    <name evidence="1" type="primary">glyA</name>
    <name type="ordered locus">Saci_1358</name>
</gene>
<accession>Q4J937</accession>
<organism>
    <name type="scientific">Sulfolobus acidocaldarius (strain ATCC 33909 / DSM 639 / JCM 8929 / NBRC 15157 / NCIMB 11770)</name>
    <dbReference type="NCBI Taxonomy" id="330779"/>
    <lineage>
        <taxon>Archaea</taxon>
        <taxon>Thermoproteota</taxon>
        <taxon>Thermoprotei</taxon>
        <taxon>Sulfolobales</taxon>
        <taxon>Sulfolobaceae</taxon>
        <taxon>Sulfolobus</taxon>
    </lineage>
</organism>
<evidence type="ECO:0000255" key="1">
    <source>
        <dbReference type="HAMAP-Rule" id="MF_00051"/>
    </source>
</evidence>